<feature type="transit peptide" description="Mitochondrion" evidence="1">
    <location>
        <begin position="1"/>
        <end position="41"/>
    </location>
</feature>
<feature type="chain" id="PRO_0000007420" description="Enoyl-CoA delta isomerase 1, mitochondrial">
    <location>
        <begin position="42"/>
        <end position="302"/>
    </location>
</feature>
<feature type="binding site" evidence="4 11">
    <location>
        <begin position="106"/>
        <end position="110"/>
    </location>
    <ligand>
        <name>substrate</name>
    </ligand>
</feature>
<feature type="binding site" evidence="4 11">
    <location>
        <position position="153"/>
    </location>
    <ligand>
        <name>substrate</name>
    </ligand>
</feature>
<feature type="binding site" evidence="4 11">
    <location>
        <position position="177"/>
    </location>
    <ligand>
        <name>substrate</name>
    </ligand>
</feature>
<feature type="site" description="Important for catalytic activity" evidence="9">
    <location>
        <position position="178"/>
    </location>
</feature>
<feature type="modified residue" description="N6-acetyllysine; alternate" evidence="3">
    <location>
        <position position="61"/>
    </location>
</feature>
<feature type="modified residue" description="N6-succinyllysine; alternate" evidence="3">
    <location>
        <position position="61"/>
    </location>
</feature>
<feature type="modified residue" description="N6-succinyllysine" evidence="3">
    <location>
        <position position="84"/>
    </location>
</feature>
<feature type="modified residue" description="N6-acetyllysine" evidence="12">
    <location>
        <position position="89"/>
    </location>
</feature>
<feature type="modified residue" description="N6-acetyllysine; alternate" evidence="3">
    <location>
        <position position="283"/>
    </location>
</feature>
<feature type="modified residue" description="N6-succinyllysine; alternate" evidence="3">
    <location>
        <position position="283"/>
    </location>
</feature>
<feature type="modified residue" description="N6-succinyllysine" evidence="3">
    <location>
        <position position="288"/>
    </location>
</feature>
<feature type="splice variant" id="VSP_001358" description="In isoform 2." evidence="6">
    <location>
        <begin position="172"/>
        <end position="188"/>
    </location>
</feature>
<feature type="mutagenesis site" description="Loss of activity." evidence="4">
    <original>E</original>
    <variation>A</variation>
    <location>
        <position position="178"/>
    </location>
</feature>
<feature type="sequence conflict" description="In Ref. 4; AAH00762/AAH19316." evidence="8" ref="4">
    <original>L</original>
    <variation>P</variation>
    <location>
        <position position="14"/>
    </location>
</feature>
<feature type="sequence conflict" description="In Ref. 1; CAA81065." evidence="8" ref="1">
    <original>R</original>
    <variation>P</variation>
    <location>
        <position position="41"/>
    </location>
</feature>
<feature type="sequence conflict" description="In Ref. 6; AA sequence." evidence="8" ref="6">
    <original>S</original>
    <variation>C</variation>
    <location>
        <position position="44"/>
    </location>
</feature>
<feature type="sequence conflict" description="In Ref. 1; CAA81065." evidence="8" ref="1">
    <original>G</original>
    <variation>A</variation>
    <location>
        <position position="54"/>
    </location>
</feature>
<feature type="sequence conflict" description="In Ref. 6; AA sequence." evidence="8" ref="6">
    <original>L</original>
    <variation>F</variation>
    <location>
        <position position="78"/>
    </location>
</feature>
<feature type="sequence conflict" description="In Ref. 5; AAA35485." evidence="8" ref="5">
    <original>G</original>
    <variation>V</variation>
    <location>
        <position position="93"/>
    </location>
</feature>
<feature type="sequence conflict" description="In Ref. 6; AA sequence." evidence="8" ref="6">
    <location>
        <position position="114"/>
    </location>
</feature>
<feature type="sequence conflict" description="In Ref. 6; AA sequence." evidence="8" ref="6">
    <original>TL</original>
    <variation>PY</variation>
    <location>
        <begin position="192"/>
        <end position="193"/>
    </location>
</feature>
<feature type="sequence conflict" description="In Ref. 5; AAA35485." evidence="8" ref="5">
    <original>RALQ</original>
    <variation>SAPE</variation>
    <location>
        <begin position="204"/>
        <end position="207"/>
    </location>
</feature>
<feature type="sequence conflict" description="In Ref. 6; AA sequence." evidence="8" ref="6">
    <original>L</original>
    <variation>S</variation>
    <location>
        <position position="210"/>
    </location>
</feature>
<feature type="sequence conflict" description="In Ref. 5; AAA35485." evidence="8" ref="5">
    <original>PPA</original>
    <variation>RRP</variation>
    <location>
        <begin position="213"/>
        <end position="215"/>
    </location>
</feature>
<feature type="sequence conflict" description="In Ref. 6; AA sequence." evidence="8" ref="6">
    <original>Q</original>
    <variation>K</variation>
    <location>
        <position position="242"/>
    </location>
</feature>
<feature type="sequence conflict" description="In Ref. 6; AA sequence." evidence="8" ref="6">
    <original>A</original>
    <variation>T</variation>
    <location>
        <position position="245"/>
    </location>
</feature>
<feature type="sequence conflict" description="In Ref. 6; AA sequence." evidence="8" ref="6">
    <original>D</original>
    <variation>E</variation>
    <location>
        <position position="248"/>
    </location>
</feature>
<feature type="sequence conflict" description="In Ref. 6; AA sequence." evidence="8" ref="6">
    <original>Q</original>
    <variation>E</variation>
    <location>
        <position position="291"/>
    </location>
</feature>
<feature type="strand" evidence="13">
    <location>
        <begin position="46"/>
        <end position="52"/>
    </location>
</feature>
<feature type="turn" evidence="13">
    <location>
        <begin position="53"/>
        <end position="56"/>
    </location>
</feature>
<feature type="strand" evidence="13">
    <location>
        <begin position="57"/>
        <end position="62"/>
    </location>
</feature>
<feature type="turn" evidence="13">
    <location>
        <begin position="65"/>
        <end position="67"/>
    </location>
</feature>
<feature type="helix" evidence="13">
    <location>
        <begin position="72"/>
        <end position="87"/>
    </location>
</feature>
<feature type="strand" evidence="13">
    <location>
        <begin position="93"/>
        <end position="100"/>
    </location>
</feature>
<feature type="strand" evidence="13">
    <location>
        <begin position="102"/>
        <end position="104"/>
    </location>
</feature>
<feature type="helix" evidence="13">
    <location>
        <begin position="110"/>
        <end position="113"/>
    </location>
</feature>
<feature type="helix" evidence="13">
    <location>
        <begin position="118"/>
        <end position="136"/>
    </location>
</feature>
<feature type="strand" evidence="13">
    <location>
        <begin position="139"/>
        <end position="146"/>
    </location>
</feature>
<feature type="strand" evidence="13">
    <location>
        <begin position="148"/>
        <end position="150"/>
    </location>
</feature>
<feature type="helix" evidence="13">
    <location>
        <begin position="152"/>
        <end position="158"/>
    </location>
</feature>
<feature type="strand" evidence="13">
    <location>
        <begin position="161"/>
        <end position="167"/>
    </location>
</feature>
<feature type="helix" evidence="13">
    <location>
        <begin position="178"/>
        <end position="181"/>
    </location>
</feature>
<feature type="helix" evidence="13">
    <location>
        <begin position="187"/>
        <end position="197"/>
    </location>
</feature>
<feature type="helix" evidence="13">
    <location>
        <begin position="199"/>
        <end position="208"/>
    </location>
</feature>
<feature type="helix" evidence="13">
    <location>
        <begin position="214"/>
        <end position="219"/>
    </location>
</feature>
<feature type="strand" evidence="13">
    <location>
        <begin position="222"/>
        <end position="227"/>
    </location>
</feature>
<feature type="helix" evidence="13">
    <location>
        <begin position="229"/>
        <end position="231"/>
    </location>
</feature>
<feature type="helix" evidence="13">
    <location>
        <begin position="232"/>
        <end position="244"/>
    </location>
</feature>
<feature type="helix" evidence="13">
    <location>
        <begin position="248"/>
        <end position="267"/>
    </location>
</feature>
<feature type="helix" evidence="13">
    <location>
        <begin position="270"/>
        <end position="281"/>
    </location>
</feature>
<feature type="helix" evidence="13">
    <location>
        <begin position="284"/>
        <end position="290"/>
    </location>
</feature>
<feature type="helix" evidence="13">
    <location>
        <begin position="293"/>
        <end position="299"/>
    </location>
</feature>
<organism>
    <name type="scientific">Homo sapiens</name>
    <name type="common">Human</name>
    <dbReference type="NCBI Taxonomy" id="9606"/>
    <lineage>
        <taxon>Eukaryota</taxon>
        <taxon>Metazoa</taxon>
        <taxon>Chordata</taxon>
        <taxon>Craniata</taxon>
        <taxon>Vertebrata</taxon>
        <taxon>Euteleostomi</taxon>
        <taxon>Mammalia</taxon>
        <taxon>Eutheria</taxon>
        <taxon>Euarchontoglires</taxon>
        <taxon>Primates</taxon>
        <taxon>Haplorrhini</taxon>
        <taxon>Catarrhini</taxon>
        <taxon>Hominidae</taxon>
        <taxon>Homo</taxon>
    </lineage>
</organism>
<evidence type="ECO:0000250" key="1"/>
<evidence type="ECO:0000250" key="2">
    <source>
        <dbReference type="UniProtKB" id="P23965"/>
    </source>
</evidence>
<evidence type="ECO:0000250" key="3">
    <source>
        <dbReference type="UniProtKB" id="P42125"/>
    </source>
</evidence>
<evidence type="ECO:0000269" key="4">
    <source>
    </source>
</evidence>
<evidence type="ECO:0000269" key="5">
    <source>
    </source>
</evidence>
<evidence type="ECO:0000303" key="6">
    <source>
    </source>
</evidence>
<evidence type="ECO:0000303" key="7">
    <source>
    </source>
</evidence>
<evidence type="ECO:0000305" key="8"/>
<evidence type="ECO:0000305" key="9">
    <source>
    </source>
</evidence>
<evidence type="ECO:0000305" key="10">
    <source>
    </source>
</evidence>
<evidence type="ECO:0007744" key="11">
    <source>
        <dbReference type="PDB" id="1SG4"/>
    </source>
</evidence>
<evidence type="ECO:0007744" key="12">
    <source>
    </source>
</evidence>
<evidence type="ECO:0007829" key="13">
    <source>
        <dbReference type="PDB" id="1SG4"/>
    </source>
</evidence>
<accession>P42126</accession>
<accession>A8K512</accession>
<accession>Q13290</accession>
<accession>Q7Z2L6</accession>
<accession>Q7Z2L7</accession>
<accession>Q9BUB8</accession>
<accession>Q9BW05</accession>
<accession>Q9UDG6</accession>
<name>ECI1_HUMAN</name>
<proteinExistence type="evidence at protein level"/>
<comment type="function">
    <text evidence="2 5 10">Key enzyme of fatty acid beta-oxidation (Probable). Able to isomerize both 3-cis (3Z) and 3-trans (3E) double bonds into the 2-trans (2E) form in a range of enoyl-CoA species, with a preference for (3Z)-enoyl-CoAs over (3E)-enoyl-CoAs (By similarity) (PubMed:7818490). The catalytic efficiency of this enzyme is not affected by the fatty acyl chain length (By similarity).</text>
</comment>
<comment type="catalytic activity">
    <reaction evidence="5">
        <text>a (3Z)-enoyl-CoA = a 4-saturated (2E)-enoyl-CoA</text>
        <dbReference type="Rhea" id="RHEA:45900"/>
        <dbReference type="ChEBI" id="CHEBI:85097"/>
        <dbReference type="ChEBI" id="CHEBI:85489"/>
        <dbReference type="EC" id="5.3.3.8"/>
    </reaction>
    <physiologicalReaction direction="left-to-right" evidence="10">
        <dbReference type="Rhea" id="RHEA:45901"/>
    </physiologicalReaction>
</comment>
<comment type="catalytic activity">
    <reaction evidence="5">
        <text>a (3E)-enoyl-CoA = a 4-saturated (2E)-enoyl-CoA</text>
        <dbReference type="Rhea" id="RHEA:45228"/>
        <dbReference type="ChEBI" id="CHEBI:58521"/>
        <dbReference type="ChEBI" id="CHEBI:85097"/>
        <dbReference type="EC" id="5.3.3.8"/>
    </reaction>
    <physiologicalReaction direction="left-to-right" evidence="10">
        <dbReference type="Rhea" id="RHEA:45229"/>
    </physiologicalReaction>
</comment>
<comment type="catalytic activity">
    <reaction evidence="5">
        <text>(3Z)-octenoyl-CoA = (2E)-octenoyl-CoA</text>
        <dbReference type="Rhea" id="RHEA:46044"/>
        <dbReference type="ChEBI" id="CHEBI:62242"/>
        <dbReference type="ChEBI" id="CHEBI:85640"/>
    </reaction>
    <physiologicalReaction direction="left-to-right" evidence="10">
        <dbReference type="Rhea" id="RHEA:46045"/>
    </physiologicalReaction>
</comment>
<comment type="catalytic activity">
    <reaction evidence="2">
        <text>(2E)-tetradecenoyl-CoA = (3Z)-tetradecenoyl-CoA</text>
        <dbReference type="Rhea" id="RHEA:29847"/>
        <dbReference type="ChEBI" id="CHEBI:61405"/>
        <dbReference type="ChEBI" id="CHEBI:61968"/>
    </reaction>
    <physiologicalReaction direction="right-to-left" evidence="2">
        <dbReference type="Rhea" id="RHEA:29849"/>
    </physiologicalReaction>
</comment>
<comment type="catalytic activity">
    <reaction evidence="2">
        <text>(3Z)-dodecenoyl-CoA = (2E)-dodecenoyl-CoA</text>
        <dbReference type="Rhea" id="RHEA:23716"/>
        <dbReference type="ChEBI" id="CHEBI:57330"/>
        <dbReference type="ChEBI" id="CHEBI:58543"/>
        <dbReference type="EC" id="5.3.3.8"/>
    </reaction>
    <physiologicalReaction direction="left-to-right" evidence="2">
        <dbReference type="Rhea" id="RHEA:23717"/>
    </physiologicalReaction>
</comment>
<comment type="catalytic activity">
    <reaction evidence="2">
        <text>(3Z)-hexenoyl-CoA = (2E)-hexenoyl-CoA</text>
        <dbReference type="Rhea" id="RHEA:45748"/>
        <dbReference type="ChEBI" id="CHEBI:62077"/>
        <dbReference type="ChEBI" id="CHEBI:85415"/>
    </reaction>
    <physiologicalReaction direction="left-to-right" evidence="2">
        <dbReference type="Rhea" id="RHEA:45749"/>
    </physiologicalReaction>
</comment>
<comment type="catalytic activity">
    <reaction evidence="2">
        <text>(3Z)-decenoyl-CoA = (2E)-decenoyl-CoA</text>
        <dbReference type="Rhea" id="RHEA:77195"/>
        <dbReference type="ChEBI" id="CHEBI:61406"/>
        <dbReference type="ChEBI" id="CHEBI:195601"/>
    </reaction>
    <physiologicalReaction direction="left-to-right" evidence="2">
        <dbReference type="Rhea" id="RHEA:77196"/>
    </physiologicalReaction>
</comment>
<comment type="pathway">
    <text evidence="5">Lipid metabolism; fatty acid beta-oxidation.</text>
</comment>
<comment type="subunit">
    <text evidence="4">Homotrimer.</text>
</comment>
<comment type="subcellular location">
    <subcellularLocation>
        <location evidence="2">Mitochondrion matrix</location>
    </subcellularLocation>
</comment>
<comment type="alternative products">
    <event type="alternative splicing"/>
    <isoform>
        <id>P42126-1</id>
        <name>1</name>
        <sequence type="displayed"/>
    </isoform>
    <isoform>
        <id>P42126-2</id>
        <name>2</name>
        <sequence type="described" ref="VSP_001358"/>
    </isoform>
</comment>
<comment type="tissue specificity">
    <text evidence="5">Expressed in liver (at protein level).</text>
</comment>
<comment type="similarity">
    <text evidence="8">Belongs to the enoyl-CoA hydratase/isomerase family.</text>
</comment>
<keyword id="KW-0002">3D-structure</keyword>
<keyword id="KW-0007">Acetylation</keyword>
<keyword id="KW-0025">Alternative splicing</keyword>
<keyword id="KW-0903">Direct protein sequencing</keyword>
<keyword id="KW-0276">Fatty acid metabolism</keyword>
<keyword id="KW-0413">Isomerase</keyword>
<keyword id="KW-0443">Lipid metabolism</keyword>
<keyword id="KW-0496">Mitochondrion</keyword>
<keyword id="KW-1267">Proteomics identification</keyword>
<keyword id="KW-1185">Reference proteome</keyword>
<keyword id="KW-0809">Transit peptide</keyword>
<reference key="1">
    <citation type="journal article" date="1994" name="Genomics">
        <title>Human mitochondrial 3,2-trans-enoyl-CoA isomerase (DCI): gene structure and localization to chromosome 16p13.3.</title>
        <authorList>
            <person name="Janssen U."/>
            <person name="Fink T."/>
            <person name="Lichter P."/>
            <person name="Stoffel W."/>
        </authorList>
    </citation>
    <scope>NUCLEOTIDE SEQUENCE [GENOMIC DNA / MRNA] (ISOFORM 1)</scope>
    <source>
        <tissue>Liver</tissue>
        <tissue>Placenta</tissue>
    </source>
</reference>
<reference key="2">
    <citation type="journal article" date="2004" name="Nat. Genet.">
        <title>Complete sequencing and characterization of 21,243 full-length human cDNAs.</title>
        <authorList>
            <person name="Ota T."/>
            <person name="Suzuki Y."/>
            <person name="Nishikawa T."/>
            <person name="Otsuki T."/>
            <person name="Sugiyama T."/>
            <person name="Irie R."/>
            <person name="Wakamatsu A."/>
            <person name="Hayashi K."/>
            <person name="Sato H."/>
            <person name="Nagai K."/>
            <person name="Kimura K."/>
            <person name="Makita H."/>
            <person name="Sekine M."/>
            <person name="Obayashi M."/>
            <person name="Nishi T."/>
            <person name="Shibahara T."/>
            <person name="Tanaka T."/>
            <person name="Ishii S."/>
            <person name="Yamamoto J."/>
            <person name="Saito K."/>
            <person name="Kawai Y."/>
            <person name="Isono Y."/>
            <person name="Nakamura Y."/>
            <person name="Nagahari K."/>
            <person name="Murakami K."/>
            <person name="Yasuda T."/>
            <person name="Iwayanagi T."/>
            <person name="Wagatsuma M."/>
            <person name="Shiratori A."/>
            <person name="Sudo H."/>
            <person name="Hosoiri T."/>
            <person name="Kaku Y."/>
            <person name="Kodaira H."/>
            <person name="Kondo H."/>
            <person name="Sugawara M."/>
            <person name="Takahashi M."/>
            <person name="Kanda K."/>
            <person name="Yokoi T."/>
            <person name="Furuya T."/>
            <person name="Kikkawa E."/>
            <person name="Omura Y."/>
            <person name="Abe K."/>
            <person name="Kamihara K."/>
            <person name="Katsuta N."/>
            <person name="Sato K."/>
            <person name="Tanikawa M."/>
            <person name="Yamazaki M."/>
            <person name="Ninomiya K."/>
            <person name="Ishibashi T."/>
            <person name="Yamashita H."/>
            <person name="Murakawa K."/>
            <person name="Fujimori K."/>
            <person name="Tanai H."/>
            <person name="Kimata M."/>
            <person name="Watanabe M."/>
            <person name="Hiraoka S."/>
            <person name="Chiba Y."/>
            <person name="Ishida S."/>
            <person name="Ono Y."/>
            <person name="Takiguchi S."/>
            <person name="Watanabe S."/>
            <person name="Yosida M."/>
            <person name="Hotuta T."/>
            <person name="Kusano J."/>
            <person name="Kanehori K."/>
            <person name="Takahashi-Fujii A."/>
            <person name="Hara H."/>
            <person name="Tanase T.-O."/>
            <person name="Nomura Y."/>
            <person name="Togiya S."/>
            <person name="Komai F."/>
            <person name="Hara R."/>
            <person name="Takeuchi K."/>
            <person name="Arita M."/>
            <person name="Imose N."/>
            <person name="Musashino K."/>
            <person name="Yuuki H."/>
            <person name="Oshima A."/>
            <person name="Sasaki N."/>
            <person name="Aotsuka S."/>
            <person name="Yoshikawa Y."/>
            <person name="Matsunawa H."/>
            <person name="Ichihara T."/>
            <person name="Shiohata N."/>
            <person name="Sano S."/>
            <person name="Moriya S."/>
            <person name="Momiyama H."/>
            <person name="Satoh N."/>
            <person name="Takami S."/>
            <person name="Terashima Y."/>
            <person name="Suzuki O."/>
            <person name="Nakagawa S."/>
            <person name="Senoh A."/>
            <person name="Mizoguchi H."/>
            <person name="Goto Y."/>
            <person name="Shimizu F."/>
            <person name="Wakebe H."/>
            <person name="Hishigaki H."/>
            <person name="Watanabe T."/>
            <person name="Sugiyama A."/>
            <person name="Takemoto M."/>
            <person name="Kawakami B."/>
            <person name="Yamazaki M."/>
            <person name="Watanabe K."/>
            <person name="Kumagai A."/>
            <person name="Itakura S."/>
            <person name="Fukuzumi Y."/>
            <person name="Fujimori Y."/>
            <person name="Komiyama M."/>
            <person name="Tashiro H."/>
            <person name="Tanigami A."/>
            <person name="Fujiwara T."/>
            <person name="Ono T."/>
            <person name="Yamada K."/>
            <person name="Fujii Y."/>
            <person name="Ozaki K."/>
            <person name="Hirao M."/>
            <person name="Ohmori Y."/>
            <person name="Kawabata A."/>
            <person name="Hikiji T."/>
            <person name="Kobatake N."/>
            <person name="Inagaki H."/>
            <person name="Ikema Y."/>
            <person name="Okamoto S."/>
            <person name="Okitani R."/>
            <person name="Kawakami T."/>
            <person name="Noguchi S."/>
            <person name="Itoh T."/>
            <person name="Shigeta K."/>
            <person name="Senba T."/>
            <person name="Matsumura K."/>
            <person name="Nakajima Y."/>
            <person name="Mizuno T."/>
            <person name="Morinaga M."/>
            <person name="Sasaki M."/>
            <person name="Togashi T."/>
            <person name="Oyama M."/>
            <person name="Hata H."/>
            <person name="Watanabe M."/>
            <person name="Komatsu T."/>
            <person name="Mizushima-Sugano J."/>
            <person name="Satoh T."/>
            <person name="Shirai Y."/>
            <person name="Takahashi Y."/>
            <person name="Nakagawa K."/>
            <person name="Okumura K."/>
            <person name="Nagase T."/>
            <person name="Nomura N."/>
            <person name="Kikuchi H."/>
            <person name="Masuho Y."/>
            <person name="Yamashita R."/>
            <person name="Nakai K."/>
            <person name="Yada T."/>
            <person name="Nakamura Y."/>
            <person name="Ohara O."/>
            <person name="Isogai T."/>
            <person name="Sugano S."/>
        </authorList>
    </citation>
    <scope>NUCLEOTIDE SEQUENCE [LARGE SCALE MRNA] (ISOFORM 1)</scope>
</reference>
<reference key="3">
    <citation type="submission" date="2005-09" db="EMBL/GenBank/DDBJ databases">
        <authorList>
            <person name="Mural R.J."/>
            <person name="Istrail S."/>
            <person name="Sutton G.G."/>
            <person name="Florea L."/>
            <person name="Halpern A.L."/>
            <person name="Mobarry C.M."/>
            <person name="Lippert R."/>
            <person name="Walenz B."/>
            <person name="Shatkay H."/>
            <person name="Dew I."/>
            <person name="Miller J.R."/>
            <person name="Flanigan M.J."/>
            <person name="Edwards N.J."/>
            <person name="Bolanos R."/>
            <person name="Fasulo D."/>
            <person name="Halldorsson B.V."/>
            <person name="Hannenhalli S."/>
            <person name="Turner R."/>
            <person name="Yooseph S."/>
            <person name="Lu F."/>
            <person name="Nusskern D.R."/>
            <person name="Shue B.C."/>
            <person name="Zheng X.H."/>
            <person name="Zhong F."/>
            <person name="Delcher A.L."/>
            <person name="Huson D.H."/>
            <person name="Kravitz S.A."/>
            <person name="Mouchard L."/>
            <person name="Reinert K."/>
            <person name="Remington K.A."/>
            <person name="Clark A.G."/>
            <person name="Waterman M.S."/>
            <person name="Eichler E.E."/>
            <person name="Adams M.D."/>
            <person name="Hunkapiller M.W."/>
            <person name="Myers E.W."/>
            <person name="Venter J.C."/>
        </authorList>
    </citation>
    <scope>NUCLEOTIDE SEQUENCE [LARGE SCALE GENOMIC DNA]</scope>
</reference>
<reference key="4">
    <citation type="journal article" date="2004" name="Genome Res.">
        <title>The status, quality, and expansion of the NIH full-length cDNA project: the Mammalian Gene Collection (MGC).</title>
        <authorList>
            <consortium name="The MGC Project Team"/>
        </authorList>
    </citation>
    <scope>NUCLEOTIDE SEQUENCE [LARGE SCALE MRNA] (ISOFORMS 1 AND 2)</scope>
    <source>
        <tissue>Lung</tissue>
        <tissue>Placenta</tissue>
    </source>
</reference>
<reference key="5">
    <citation type="journal article" date="1994" name="Biochem. J.">
        <title>cDNA cloning and amino acid sequence of human mitochondrial delta 3 delta 2-enoyl-CoA isomerase: comparison of the human enzyme with its rat counterpart, mitochondrial short-chain isomerase.</title>
        <authorList>
            <person name="Kilponen J.M."/>
            <person name="Haeyrinen H.M."/>
            <person name="Rehn M.V."/>
            <person name="Hiltunen K.J."/>
        </authorList>
    </citation>
    <scope>NUCLEOTIDE SEQUENCE [MRNA] OF 37-302 (ISOFORM 1)</scope>
</reference>
<reference key="6">
    <citation type="journal article" date="1994" name="Biochem. J.">
        <title>Delta 3, delta 2-enoyl-CoA isomerase is the protein that copurifies with human glutathione S-transferases from S-hexylglutathione affinity matrices.</title>
        <authorList>
            <person name="Takahashi Y."/>
            <person name="Hirata Y."/>
            <person name="Burstein Y."/>
            <person name="Listowsky I."/>
        </authorList>
    </citation>
    <scope>PROTEIN SEQUENCE OF 42-84; 89-116; 190-220; 242-255 AND 288-298</scope>
    <scope>FUNCTION</scope>
    <scope>CATALYTIC ACTIVITY</scope>
    <scope>TISSUE SPECIFICITY</scope>
    <source>
        <tissue>Liver</tissue>
    </source>
</reference>
<reference key="7">
    <citation type="journal article" date="2009" name="Science">
        <title>Lysine acetylation targets protein complexes and co-regulates major cellular functions.</title>
        <authorList>
            <person name="Choudhary C."/>
            <person name="Kumar C."/>
            <person name="Gnad F."/>
            <person name="Nielsen M.L."/>
            <person name="Rehman M."/>
            <person name="Walther T.C."/>
            <person name="Olsen J.V."/>
            <person name="Mann M."/>
        </authorList>
    </citation>
    <scope>ACETYLATION [LARGE SCALE ANALYSIS] AT LYS-89</scope>
    <scope>IDENTIFICATION BY MASS SPECTROMETRY [LARGE SCALE ANALYSIS]</scope>
</reference>
<reference key="8">
    <citation type="journal article" date="2011" name="BMC Syst. Biol.">
        <title>Initial characterization of the human central proteome.</title>
        <authorList>
            <person name="Burkard T.R."/>
            <person name="Planyavsky M."/>
            <person name="Kaupe I."/>
            <person name="Breitwieser F.P."/>
            <person name="Buerckstuemmer T."/>
            <person name="Bennett K.L."/>
            <person name="Superti-Furga G."/>
            <person name="Colinge J."/>
        </authorList>
    </citation>
    <scope>IDENTIFICATION BY MASS SPECTROMETRY [LARGE SCALE ANALYSIS]</scope>
</reference>
<reference key="9">
    <citation type="journal article" date="2014" name="J. Proteomics">
        <title>An enzyme assisted RP-RPLC approach for in-depth analysis of human liver phosphoproteome.</title>
        <authorList>
            <person name="Bian Y."/>
            <person name="Song C."/>
            <person name="Cheng K."/>
            <person name="Dong M."/>
            <person name="Wang F."/>
            <person name="Huang J."/>
            <person name="Sun D."/>
            <person name="Wang L."/>
            <person name="Ye M."/>
            <person name="Zou H."/>
        </authorList>
    </citation>
    <scope>IDENTIFICATION BY MASS SPECTROMETRY [LARGE SCALE ANALYSIS]</scope>
    <source>
        <tissue>Liver</tissue>
    </source>
</reference>
<reference key="10">
    <citation type="journal article" date="2015" name="Proteomics">
        <title>N-terminome analysis of the human mitochondrial proteome.</title>
        <authorList>
            <person name="Vaca Jacome A.S."/>
            <person name="Rabilloud T."/>
            <person name="Schaeffer-Reiss C."/>
            <person name="Rompais M."/>
            <person name="Ayoub D."/>
            <person name="Lane L."/>
            <person name="Bairoch A."/>
            <person name="Van Dorsselaer A."/>
            <person name="Carapito C."/>
        </authorList>
    </citation>
    <scope>IDENTIFICATION BY MASS SPECTROMETRY [LARGE SCALE ANALYSIS]</scope>
</reference>
<reference key="11">
    <citation type="journal article" date="2004" name="J. Mol. Biol.">
        <title>The 1.3 A crystal structure of human mitochondrial Delta3-Delta2-enoyl-CoA isomerase shows a novel mode of binding for the fatty acyl group.</title>
        <authorList>
            <person name="Partanen S.T."/>
            <person name="Novikov D.K."/>
            <person name="Popov A.N."/>
            <person name="Mursula A.M."/>
            <person name="Hiltunen J.K."/>
            <person name="Wierenga R.K."/>
        </authorList>
    </citation>
    <scope>X-RAY CRYSTALLOGRAPHY (1.3 ANGSTROMS) OF 43-302 IN COMPLEX WITH OCTANOYL-COENZYME A</scope>
    <scope>SUBUNIT</scope>
    <scope>MUTAGENESIS OF GLU-178</scope>
</reference>
<sequence length="302" mass="32816">MALVASVRVPARVLLRAGARLPGAALGRTERAAGGGDGARRFGSQRVLVEPDAGAGVAVMKFKNPPVNSLSLEFLTELVISLEKLENDKSFRGVILTSDRPGVFSAGLDLTEMCGRSPAHYAGYWKAVQELWLRLYQSNLVLVSAINGACPAGGCLVALTCDYRILADNPRYCIGLNETQLGIIAPFWLKDTLENTIGHRAAERALQLGLLFPPAEALQVGIVDQVVPEEQVQSTALSAIAQWMAIPDHARQLTKAMMRKATASRLVTQRDADVQNFVSFISKDSIQKSLQMYLERLKEEKG</sequence>
<protein>
    <recommendedName>
        <fullName>Enoyl-CoA delta isomerase 1, mitochondrial</fullName>
        <ecNumber evidence="5">5.3.3.8</ecNumber>
    </recommendedName>
    <alternativeName>
        <fullName>3,2-trans-enoyl-CoA isomerase</fullName>
    </alternativeName>
    <alternativeName>
        <fullName evidence="7">Delta(3),Delta(2)-enoyl-CoA isomerase</fullName>
        <shortName evidence="7">D3,D2-enoyl-CoA isomerase</shortName>
    </alternativeName>
    <alternativeName>
        <fullName>Dodecenoyl-CoA isomerase</fullName>
    </alternativeName>
</protein>
<gene>
    <name type="primary">ECI1</name>
    <name type="synonym">DCI</name>
</gene>
<dbReference type="EC" id="5.3.3.8" evidence="5"/>
<dbReference type="EMBL" id="Z25820">
    <property type="protein sequence ID" value="CAA81065.1"/>
    <property type="molecule type" value="mRNA"/>
</dbReference>
<dbReference type="EMBL" id="Z25821">
    <property type="protein sequence ID" value="CAA81066.1"/>
    <property type="molecule type" value="Genomic_DNA"/>
</dbReference>
<dbReference type="EMBL" id="Z25822">
    <property type="protein sequence ID" value="CAA81066.1"/>
    <property type="status" value="JOINED"/>
    <property type="molecule type" value="Genomic_DNA"/>
</dbReference>
<dbReference type="EMBL" id="Z25823">
    <property type="protein sequence ID" value="CAA81066.1"/>
    <property type="status" value="JOINED"/>
    <property type="molecule type" value="Genomic_DNA"/>
</dbReference>
<dbReference type="EMBL" id="Z25824">
    <property type="protein sequence ID" value="CAA81066.1"/>
    <property type="status" value="JOINED"/>
    <property type="molecule type" value="Genomic_DNA"/>
</dbReference>
<dbReference type="EMBL" id="AK291127">
    <property type="protein sequence ID" value="BAF83816.1"/>
    <property type="molecule type" value="mRNA"/>
</dbReference>
<dbReference type="EMBL" id="CH471112">
    <property type="protein sequence ID" value="EAW85524.1"/>
    <property type="molecule type" value="Genomic_DNA"/>
</dbReference>
<dbReference type="EMBL" id="BC000762">
    <property type="protein sequence ID" value="AAH00762.1"/>
    <property type="molecule type" value="mRNA"/>
</dbReference>
<dbReference type="EMBL" id="BC002746">
    <property type="protein sequence ID" value="AAH02746.1"/>
    <property type="molecule type" value="mRNA"/>
</dbReference>
<dbReference type="EMBL" id="BC020228">
    <property type="protein sequence ID" value="AAH20228.1"/>
    <property type="molecule type" value="mRNA"/>
</dbReference>
<dbReference type="EMBL" id="BC019316">
    <property type="protein sequence ID" value="AAH19316.1"/>
    <property type="molecule type" value="mRNA"/>
</dbReference>
<dbReference type="EMBL" id="L24774">
    <property type="protein sequence ID" value="AAA35485.1"/>
    <property type="molecule type" value="mRNA"/>
</dbReference>
<dbReference type="CCDS" id="CCDS10464.1">
    <molecule id="P42126-1"/>
</dbReference>
<dbReference type="CCDS" id="CCDS58410.1">
    <molecule id="P42126-2"/>
</dbReference>
<dbReference type="PIR" id="A55723">
    <property type="entry name" value="A55723"/>
</dbReference>
<dbReference type="RefSeq" id="NP_001171500.1">
    <molecule id="P42126-2"/>
    <property type="nucleotide sequence ID" value="NM_001178029.2"/>
</dbReference>
<dbReference type="RefSeq" id="NP_001910.2">
    <molecule id="P42126-1"/>
    <property type="nucleotide sequence ID" value="NM_001919.4"/>
</dbReference>
<dbReference type="PDB" id="1SG4">
    <property type="method" value="X-ray"/>
    <property type="resolution" value="1.30 A"/>
    <property type="chains" value="A/B/C=43-302"/>
</dbReference>
<dbReference type="PDBsum" id="1SG4"/>
<dbReference type="SMR" id="P42126"/>
<dbReference type="BioGRID" id="108000">
    <property type="interactions" value="64"/>
</dbReference>
<dbReference type="FunCoup" id="P42126">
    <property type="interactions" value="691"/>
</dbReference>
<dbReference type="IntAct" id="P42126">
    <property type="interactions" value="11"/>
</dbReference>
<dbReference type="MINT" id="P42126"/>
<dbReference type="STRING" id="9606.ENSP00000301729"/>
<dbReference type="DrugBank" id="DB03127">
    <property type="generic name" value="Benzamidine"/>
</dbReference>
<dbReference type="DrugBank" id="DB02910">
    <property type="generic name" value="Octanoyl-Coenzyme A"/>
</dbReference>
<dbReference type="SwissLipids" id="SLP:000001184"/>
<dbReference type="GlyGen" id="P42126">
    <property type="glycosylation" value="1 site, 1 O-linked glycan (1 site)"/>
</dbReference>
<dbReference type="iPTMnet" id="P42126"/>
<dbReference type="PhosphoSitePlus" id="P42126"/>
<dbReference type="SwissPalm" id="P42126"/>
<dbReference type="BioMuta" id="ECI1"/>
<dbReference type="DMDM" id="1169204"/>
<dbReference type="OGP" id="P42126"/>
<dbReference type="jPOST" id="P42126"/>
<dbReference type="MassIVE" id="P42126"/>
<dbReference type="PaxDb" id="9606-ENSP00000301729"/>
<dbReference type="PeptideAtlas" id="P42126"/>
<dbReference type="ProteomicsDB" id="55485">
    <molecule id="P42126-1"/>
</dbReference>
<dbReference type="ProteomicsDB" id="55486">
    <molecule id="P42126-2"/>
</dbReference>
<dbReference type="Pumba" id="P42126"/>
<dbReference type="TopDownProteomics" id="P42126-1">
    <molecule id="P42126-1"/>
</dbReference>
<dbReference type="TopDownProteomics" id="P42126-2">
    <molecule id="P42126-2"/>
</dbReference>
<dbReference type="Antibodypedia" id="23677">
    <property type="antibodies" value="282 antibodies from 32 providers"/>
</dbReference>
<dbReference type="DNASU" id="1632"/>
<dbReference type="Ensembl" id="ENST00000301729.9">
    <molecule id="P42126-1"/>
    <property type="protein sequence ID" value="ENSP00000301729.4"/>
    <property type="gene ID" value="ENSG00000167969.13"/>
</dbReference>
<dbReference type="Ensembl" id="ENST00000562238.5">
    <molecule id="P42126-2"/>
    <property type="protein sequence ID" value="ENSP00000456319.1"/>
    <property type="gene ID" value="ENSG00000167969.13"/>
</dbReference>
<dbReference type="GeneID" id="1632"/>
<dbReference type="KEGG" id="hsa:1632"/>
<dbReference type="MANE-Select" id="ENST00000301729.9">
    <property type="protein sequence ID" value="ENSP00000301729.4"/>
    <property type="RefSeq nucleotide sequence ID" value="NM_001919.4"/>
    <property type="RefSeq protein sequence ID" value="NP_001910.2"/>
</dbReference>
<dbReference type="UCSC" id="uc002cpr.4">
    <molecule id="P42126-1"/>
    <property type="organism name" value="human"/>
</dbReference>
<dbReference type="AGR" id="HGNC:2703"/>
<dbReference type="CTD" id="1632"/>
<dbReference type="DisGeNET" id="1632"/>
<dbReference type="GeneCards" id="ECI1"/>
<dbReference type="HGNC" id="HGNC:2703">
    <property type="gene designation" value="ECI1"/>
</dbReference>
<dbReference type="HPA" id="ENSG00000167969">
    <property type="expression patterns" value="Low tissue specificity"/>
</dbReference>
<dbReference type="MalaCards" id="ECI1"/>
<dbReference type="MIM" id="600305">
    <property type="type" value="gene"/>
</dbReference>
<dbReference type="neXtProt" id="NX_P42126"/>
<dbReference type="OpenTargets" id="ENSG00000167969"/>
<dbReference type="PharmGKB" id="PA27173"/>
<dbReference type="VEuPathDB" id="HostDB:ENSG00000167969"/>
<dbReference type="eggNOG" id="KOG1683">
    <property type="taxonomic scope" value="Eukaryota"/>
</dbReference>
<dbReference type="GeneTree" id="ENSGT00390000005678"/>
<dbReference type="InParanoid" id="P42126"/>
<dbReference type="OMA" id="WFMSSFL"/>
<dbReference type="OrthoDB" id="1696280at2759"/>
<dbReference type="PAN-GO" id="P42126">
    <property type="GO annotations" value="3 GO annotations based on evolutionary models"/>
</dbReference>
<dbReference type="PhylomeDB" id="P42126"/>
<dbReference type="TreeFam" id="TF314436"/>
<dbReference type="BRENDA" id="5.3.3.8">
    <property type="organism ID" value="2681"/>
</dbReference>
<dbReference type="PathwayCommons" id="P42126"/>
<dbReference type="Reactome" id="R-HSA-77288">
    <property type="pathway name" value="mitochondrial fatty acid beta-oxidation of unsaturated fatty acids"/>
</dbReference>
<dbReference type="Reactome" id="R-HSA-9837999">
    <property type="pathway name" value="Mitochondrial protein degradation"/>
</dbReference>
<dbReference type="SignaLink" id="P42126"/>
<dbReference type="UniPathway" id="UPA00659"/>
<dbReference type="BioGRID-ORCS" id="1632">
    <property type="hits" value="14 hits in 1156 CRISPR screens"/>
</dbReference>
<dbReference type="ChiTaRS" id="ECI1">
    <property type="organism name" value="human"/>
</dbReference>
<dbReference type="EvolutionaryTrace" id="P42126"/>
<dbReference type="GenomeRNAi" id="1632"/>
<dbReference type="Pharos" id="P42126">
    <property type="development level" value="Tbio"/>
</dbReference>
<dbReference type="PRO" id="PR:P42126"/>
<dbReference type="Proteomes" id="UP000005640">
    <property type="component" value="Chromosome 16"/>
</dbReference>
<dbReference type="RNAct" id="P42126">
    <property type="molecule type" value="protein"/>
</dbReference>
<dbReference type="Bgee" id="ENSG00000167969">
    <property type="expression patterns" value="Expressed in apex of heart and 193 other cell types or tissues"/>
</dbReference>
<dbReference type="ExpressionAtlas" id="P42126">
    <property type="expression patterns" value="baseline and differential"/>
</dbReference>
<dbReference type="GO" id="GO:0005759">
    <property type="term" value="C:mitochondrial matrix"/>
    <property type="evidence" value="ECO:0000304"/>
    <property type="project" value="Reactome"/>
</dbReference>
<dbReference type="GO" id="GO:0005739">
    <property type="term" value="C:mitochondrion"/>
    <property type="evidence" value="ECO:0000314"/>
    <property type="project" value="HPA"/>
</dbReference>
<dbReference type="GO" id="GO:0004165">
    <property type="term" value="F:delta(3)-delta(2)-enoyl-CoA isomerase activity"/>
    <property type="evidence" value="ECO:0000250"/>
    <property type="project" value="UniProtKB"/>
</dbReference>
<dbReference type="GO" id="GO:0016863">
    <property type="term" value="F:intramolecular oxidoreductase activity, transposing C=C bonds"/>
    <property type="evidence" value="ECO:0000250"/>
    <property type="project" value="UniProtKB"/>
</dbReference>
<dbReference type="GO" id="GO:0006635">
    <property type="term" value="P:fatty acid beta-oxidation"/>
    <property type="evidence" value="ECO:0000250"/>
    <property type="project" value="UniProtKB"/>
</dbReference>
<dbReference type="CDD" id="cd06558">
    <property type="entry name" value="crotonase-like"/>
    <property type="match status" value="1"/>
</dbReference>
<dbReference type="FunFam" id="3.90.226.10:FF:000034">
    <property type="entry name" value="Enoyl-CoA delta isomerase 1"/>
    <property type="match status" value="1"/>
</dbReference>
<dbReference type="Gene3D" id="6.10.250.170">
    <property type="match status" value="1"/>
</dbReference>
<dbReference type="Gene3D" id="3.90.226.10">
    <property type="entry name" value="2-enoyl-CoA Hydratase, Chain A, domain 1"/>
    <property type="match status" value="1"/>
</dbReference>
<dbReference type="InterPro" id="IPR029045">
    <property type="entry name" value="ClpP/crotonase-like_dom_sf"/>
</dbReference>
<dbReference type="InterPro" id="IPR018376">
    <property type="entry name" value="Enoyl-CoA_hyd/isom_CS"/>
</dbReference>
<dbReference type="InterPro" id="IPR001753">
    <property type="entry name" value="Enoyl-CoA_hydra/iso"/>
</dbReference>
<dbReference type="PANTHER" id="PTHR11941:SF45">
    <property type="entry name" value="ENOYL-COA DELTA ISOMERASE 1, MITOCHONDRIAL"/>
    <property type="match status" value="1"/>
</dbReference>
<dbReference type="PANTHER" id="PTHR11941">
    <property type="entry name" value="ENOYL-COA HYDRATASE-RELATED"/>
    <property type="match status" value="1"/>
</dbReference>
<dbReference type="Pfam" id="PF00378">
    <property type="entry name" value="ECH_1"/>
    <property type="match status" value="1"/>
</dbReference>
<dbReference type="SUPFAM" id="SSF52096">
    <property type="entry name" value="ClpP/crotonase"/>
    <property type="match status" value="1"/>
</dbReference>
<dbReference type="PROSITE" id="PS00166">
    <property type="entry name" value="ENOYL_COA_HYDRATASE"/>
    <property type="match status" value="1"/>
</dbReference>